<proteinExistence type="inferred from homology"/>
<comment type="function">
    <text evidence="1">NAD-dependent protein deacetylase which modulates the activities of several enzymes which are inactive in their acetylated form.</text>
</comment>
<comment type="catalytic activity">
    <reaction evidence="1">
        <text>N(6)-acetyl-L-lysyl-[protein] + NAD(+) + H2O = 2''-O-acetyl-ADP-D-ribose + nicotinamide + L-lysyl-[protein]</text>
        <dbReference type="Rhea" id="RHEA:43636"/>
        <dbReference type="Rhea" id="RHEA-COMP:9752"/>
        <dbReference type="Rhea" id="RHEA-COMP:10731"/>
        <dbReference type="ChEBI" id="CHEBI:15377"/>
        <dbReference type="ChEBI" id="CHEBI:17154"/>
        <dbReference type="ChEBI" id="CHEBI:29969"/>
        <dbReference type="ChEBI" id="CHEBI:57540"/>
        <dbReference type="ChEBI" id="CHEBI:61930"/>
        <dbReference type="ChEBI" id="CHEBI:83767"/>
        <dbReference type="EC" id="2.3.1.286"/>
    </reaction>
</comment>
<comment type="cofactor">
    <cofactor evidence="1">
        <name>Zn(2+)</name>
        <dbReference type="ChEBI" id="CHEBI:29105"/>
    </cofactor>
    <text evidence="1">Binds 1 zinc ion per subunit.</text>
</comment>
<comment type="subcellular location">
    <subcellularLocation>
        <location evidence="1">Cytoplasm</location>
    </subcellularLocation>
</comment>
<comment type="similarity">
    <text evidence="1">Belongs to the sirtuin family. Class U subfamily.</text>
</comment>
<comment type="sequence caution" evidence="3">
    <conflict type="erroneous initiation">
        <sequence resource="EMBL-CDS" id="AAT55183"/>
    </conflict>
    <text>Extended N-terminus.</text>
</comment>
<reference key="1">
    <citation type="journal article" date="2003" name="Nature">
        <title>The genome sequence of Bacillus anthracis Ames and comparison to closely related bacteria.</title>
        <authorList>
            <person name="Read T.D."/>
            <person name="Peterson S.N."/>
            <person name="Tourasse N.J."/>
            <person name="Baillie L.W."/>
            <person name="Paulsen I.T."/>
            <person name="Nelson K.E."/>
            <person name="Tettelin H."/>
            <person name="Fouts D.E."/>
            <person name="Eisen J.A."/>
            <person name="Gill S.R."/>
            <person name="Holtzapple E.K."/>
            <person name="Okstad O.A."/>
            <person name="Helgason E."/>
            <person name="Rilstone J."/>
            <person name="Wu M."/>
            <person name="Kolonay J.F."/>
            <person name="Beanan M.J."/>
            <person name="Dodson R.J."/>
            <person name="Brinkac L.M."/>
            <person name="Gwinn M.L."/>
            <person name="DeBoy R.T."/>
            <person name="Madpu R."/>
            <person name="Daugherty S.C."/>
            <person name="Durkin A.S."/>
            <person name="Haft D.H."/>
            <person name="Nelson W.C."/>
            <person name="Peterson J.D."/>
            <person name="Pop M."/>
            <person name="Khouri H.M."/>
            <person name="Radune D."/>
            <person name="Benton J.L."/>
            <person name="Mahamoud Y."/>
            <person name="Jiang L."/>
            <person name="Hance I.R."/>
            <person name="Weidman J.F."/>
            <person name="Berry K.J."/>
            <person name="Plaut R.D."/>
            <person name="Wolf A.M."/>
            <person name="Watkins K.L."/>
            <person name="Nierman W.C."/>
            <person name="Hazen A."/>
            <person name="Cline R.T."/>
            <person name="Redmond C."/>
            <person name="Thwaite J.E."/>
            <person name="White O."/>
            <person name="Salzberg S.L."/>
            <person name="Thomason B."/>
            <person name="Friedlander A.M."/>
            <person name="Koehler T.M."/>
            <person name="Hanna P.C."/>
            <person name="Kolstoe A.-B."/>
            <person name="Fraser C.M."/>
        </authorList>
    </citation>
    <scope>NUCLEOTIDE SEQUENCE [LARGE SCALE GENOMIC DNA]</scope>
    <source>
        <strain>Ames / isolate Porton</strain>
    </source>
</reference>
<reference key="2">
    <citation type="journal article" date="2009" name="J. Bacteriol.">
        <title>The complete genome sequence of Bacillus anthracis Ames 'Ancestor'.</title>
        <authorList>
            <person name="Ravel J."/>
            <person name="Jiang L."/>
            <person name="Stanley S.T."/>
            <person name="Wilson M.R."/>
            <person name="Decker R.S."/>
            <person name="Read T.D."/>
            <person name="Worsham P."/>
            <person name="Keim P.S."/>
            <person name="Salzberg S.L."/>
            <person name="Fraser-Liggett C.M."/>
            <person name="Rasko D.A."/>
        </authorList>
    </citation>
    <scope>NUCLEOTIDE SEQUENCE [LARGE SCALE GENOMIC DNA]</scope>
    <source>
        <strain>Ames ancestor</strain>
    </source>
</reference>
<reference key="3">
    <citation type="submission" date="2004-01" db="EMBL/GenBank/DDBJ databases">
        <title>Complete genome sequence of Bacillus anthracis Sterne.</title>
        <authorList>
            <person name="Brettin T.S."/>
            <person name="Bruce D."/>
            <person name="Challacombe J.F."/>
            <person name="Gilna P."/>
            <person name="Han C."/>
            <person name="Hill K."/>
            <person name="Hitchcock P."/>
            <person name="Jackson P."/>
            <person name="Keim P."/>
            <person name="Longmire J."/>
            <person name="Lucas S."/>
            <person name="Okinaka R."/>
            <person name="Richardson P."/>
            <person name="Rubin E."/>
            <person name="Tice H."/>
        </authorList>
    </citation>
    <scope>NUCLEOTIDE SEQUENCE [LARGE SCALE GENOMIC DNA]</scope>
    <source>
        <strain>Sterne</strain>
    </source>
</reference>
<evidence type="ECO:0000255" key="1">
    <source>
        <dbReference type="HAMAP-Rule" id="MF_01968"/>
    </source>
</evidence>
<evidence type="ECO:0000255" key="2">
    <source>
        <dbReference type="PROSITE-ProRule" id="PRU00236"/>
    </source>
</evidence>
<evidence type="ECO:0000305" key="3"/>
<organism>
    <name type="scientific">Bacillus anthracis</name>
    <dbReference type="NCBI Taxonomy" id="1392"/>
    <lineage>
        <taxon>Bacteria</taxon>
        <taxon>Bacillati</taxon>
        <taxon>Bacillota</taxon>
        <taxon>Bacilli</taxon>
        <taxon>Bacillales</taxon>
        <taxon>Bacillaceae</taxon>
        <taxon>Bacillus</taxon>
        <taxon>Bacillus cereus group</taxon>
    </lineage>
</organism>
<protein>
    <recommendedName>
        <fullName evidence="1">NAD-dependent protein deacetylase</fullName>
        <ecNumber evidence="1 2">2.3.1.286</ecNumber>
    </recommendedName>
    <alternativeName>
        <fullName evidence="1">Regulatory protein SIR2 homolog</fullName>
    </alternativeName>
</protein>
<name>NPD_BACAN</name>
<sequence length="242" mass="27619">MQQFEEVRTILEKAKKITVLTGAGASTESGIPDFRSANGLYADANVEMYLSRGYYNRSPKEFWKHYKEIFQINTFHQYKPNRGHRFLAELEEQGKDITILTQNIDGLHQVGGSKHVIDLHGTLQTAHCPKCKMGYDLQYMIDHEVPRCEKCNFILNPDVVLYGDTLPQYQNAIKRLYETDVLIVMGTSLKVQPVASFPQIAKREVGATTILVNEELTGQEYNFDYVFQNKIGEFVEGLSSIK</sequence>
<gene>
    <name evidence="1" type="primary">cobB</name>
    <name type="ordered locus">BA_3089</name>
    <name type="ordered locus">GBAA_3089</name>
    <name type="ordered locus">BAS2874</name>
</gene>
<keyword id="KW-0963">Cytoplasm</keyword>
<keyword id="KW-0479">Metal-binding</keyword>
<keyword id="KW-0520">NAD</keyword>
<keyword id="KW-1185">Reference proteome</keyword>
<keyword id="KW-0808">Transferase</keyword>
<keyword id="KW-0862">Zinc</keyword>
<accession>Q81NT6</accession>
<accession>Q6HX06</accession>
<dbReference type="EC" id="2.3.1.286" evidence="1 2"/>
<dbReference type="EMBL" id="AE016879">
    <property type="protein sequence ID" value="AAP26902.1"/>
    <property type="molecule type" value="Genomic_DNA"/>
</dbReference>
<dbReference type="EMBL" id="AE017334">
    <property type="protein sequence ID" value="AAT70139.1"/>
    <property type="molecule type" value="Genomic_DNA"/>
</dbReference>
<dbReference type="EMBL" id="AE017225">
    <property type="protein sequence ID" value="AAT55183.1"/>
    <property type="status" value="ALT_INIT"/>
    <property type="molecule type" value="Genomic_DNA"/>
</dbReference>
<dbReference type="RefSeq" id="NP_845416.3">
    <property type="nucleotide sequence ID" value="NC_003997.3"/>
</dbReference>
<dbReference type="RefSeq" id="WP_001183818.1">
    <property type="nucleotide sequence ID" value="NZ_WXXJ01000001.1"/>
</dbReference>
<dbReference type="SMR" id="Q81NT6"/>
<dbReference type="IntAct" id="Q81NT6">
    <property type="interactions" value="1"/>
</dbReference>
<dbReference type="STRING" id="261594.GBAA_3089"/>
<dbReference type="DNASU" id="1088325"/>
<dbReference type="GeneID" id="45022893"/>
<dbReference type="KEGG" id="ban:BA_3089"/>
<dbReference type="KEGG" id="bar:GBAA_3089"/>
<dbReference type="KEGG" id="bat:BAS2874"/>
<dbReference type="PATRIC" id="fig|198094.11.peg.3071"/>
<dbReference type="eggNOG" id="COG0846">
    <property type="taxonomic scope" value="Bacteria"/>
</dbReference>
<dbReference type="HOGENOM" id="CLU_023643_3_0_9"/>
<dbReference type="OMA" id="KWIAAGP"/>
<dbReference type="OrthoDB" id="9800582at2"/>
<dbReference type="Proteomes" id="UP000000427">
    <property type="component" value="Chromosome"/>
</dbReference>
<dbReference type="Proteomes" id="UP000000594">
    <property type="component" value="Chromosome"/>
</dbReference>
<dbReference type="GO" id="GO:0005737">
    <property type="term" value="C:cytoplasm"/>
    <property type="evidence" value="ECO:0007669"/>
    <property type="project" value="UniProtKB-SubCell"/>
</dbReference>
<dbReference type="GO" id="GO:0017136">
    <property type="term" value="F:histone deacetylase activity, NAD-dependent"/>
    <property type="evidence" value="ECO:0007669"/>
    <property type="project" value="TreeGrafter"/>
</dbReference>
<dbReference type="GO" id="GO:0070403">
    <property type="term" value="F:NAD+ binding"/>
    <property type="evidence" value="ECO:0007669"/>
    <property type="project" value="UniProtKB-UniRule"/>
</dbReference>
<dbReference type="GO" id="GO:0008270">
    <property type="term" value="F:zinc ion binding"/>
    <property type="evidence" value="ECO:0007669"/>
    <property type="project" value="UniProtKB-UniRule"/>
</dbReference>
<dbReference type="CDD" id="cd01413">
    <property type="entry name" value="SIR2_Af2"/>
    <property type="match status" value="1"/>
</dbReference>
<dbReference type="Gene3D" id="3.30.1600.10">
    <property type="entry name" value="SIR2/SIRT2 'Small Domain"/>
    <property type="match status" value="1"/>
</dbReference>
<dbReference type="Gene3D" id="3.40.50.1220">
    <property type="entry name" value="TPP-binding domain"/>
    <property type="match status" value="1"/>
</dbReference>
<dbReference type="HAMAP" id="MF_01968">
    <property type="entry name" value="Sirtuin_ClassU"/>
    <property type="match status" value="1"/>
</dbReference>
<dbReference type="InterPro" id="IPR029035">
    <property type="entry name" value="DHS-like_NAD/FAD-binding_dom"/>
</dbReference>
<dbReference type="InterPro" id="IPR050134">
    <property type="entry name" value="NAD-dep_sirtuin_deacylases"/>
</dbReference>
<dbReference type="InterPro" id="IPR003000">
    <property type="entry name" value="Sirtuin"/>
</dbReference>
<dbReference type="InterPro" id="IPR026591">
    <property type="entry name" value="Sirtuin_cat_small_dom_sf"/>
</dbReference>
<dbReference type="InterPro" id="IPR028628">
    <property type="entry name" value="Sirtuin_class_U"/>
</dbReference>
<dbReference type="InterPro" id="IPR026590">
    <property type="entry name" value="Ssirtuin_cat_dom"/>
</dbReference>
<dbReference type="NCBIfam" id="NF001752">
    <property type="entry name" value="PRK00481.1-1"/>
    <property type="match status" value="1"/>
</dbReference>
<dbReference type="NCBIfam" id="NF001754">
    <property type="entry name" value="PRK00481.1-4"/>
    <property type="match status" value="1"/>
</dbReference>
<dbReference type="PANTHER" id="PTHR11085:SF4">
    <property type="entry name" value="NAD-DEPENDENT PROTEIN DEACYLASE"/>
    <property type="match status" value="1"/>
</dbReference>
<dbReference type="PANTHER" id="PTHR11085">
    <property type="entry name" value="NAD-DEPENDENT PROTEIN DEACYLASE SIRTUIN-5, MITOCHONDRIAL-RELATED"/>
    <property type="match status" value="1"/>
</dbReference>
<dbReference type="Pfam" id="PF02146">
    <property type="entry name" value="SIR2"/>
    <property type="match status" value="1"/>
</dbReference>
<dbReference type="SUPFAM" id="SSF52467">
    <property type="entry name" value="DHS-like NAD/FAD-binding domain"/>
    <property type="match status" value="1"/>
</dbReference>
<dbReference type="PROSITE" id="PS50305">
    <property type="entry name" value="SIRTUIN"/>
    <property type="match status" value="1"/>
</dbReference>
<feature type="chain" id="PRO_0000110287" description="NAD-dependent protein deacetylase">
    <location>
        <begin position="1"/>
        <end position="242"/>
    </location>
</feature>
<feature type="domain" description="Deacetylase sirtuin-type" evidence="2">
    <location>
        <begin position="1"/>
        <end position="242"/>
    </location>
</feature>
<feature type="active site" description="Proton acceptor" evidence="2">
    <location>
        <position position="120"/>
    </location>
</feature>
<feature type="binding site" evidence="1">
    <location>
        <position position="23"/>
    </location>
    <ligand>
        <name>NAD(+)</name>
        <dbReference type="ChEBI" id="CHEBI:57540"/>
    </ligand>
</feature>
<feature type="binding site" evidence="1">
    <location>
        <position position="27"/>
    </location>
    <ligand>
        <name>NAD(+)</name>
        <dbReference type="ChEBI" id="CHEBI:57540"/>
    </ligand>
</feature>
<feature type="binding site" evidence="1">
    <location>
        <position position="34"/>
    </location>
    <ligand>
        <name>NAD(+)</name>
        <dbReference type="ChEBI" id="CHEBI:57540"/>
    </ligand>
</feature>
<feature type="binding site" evidence="1">
    <location>
        <position position="34"/>
    </location>
    <ligand>
        <name>nicotinamide</name>
        <dbReference type="ChEBI" id="CHEBI:17154"/>
    </ligand>
</feature>
<feature type="binding site" evidence="1">
    <location>
        <position position="35"/>
    </location>
    <ligand>
        <name>NAD(+)</name>
        <dbReference type="ChEBI" id="CHEBI:57540"/>
    </ligand>
</feature>
<feature type="binding site" evidence="1">
    <location>
        <position position="102"/>
    </location>
    <ligand>
        <name>NAD(+)</name>
        <dbReference type="ChEBI" id="CHEBI:57540"/>
    </ligand>
</feature>
<feature type="binding site" evidence="1">
    <location>
        <position position="104"/>
    </location>
    <ligand>
        <name>NAD(+)</name>
        <dbReference type="ChEBI" id="CHEBI:57540"/>
    </ligand>
</feature>
<feature type="binding site" evidence="1">
    <location>
        <position position="104"/>
    </location>
    <ligand>
        <name>nicotinamide</name>
        <dbReference type="ChEBI" id="CHEBI:17154"/>
    </ligand>
</feature>
<feature type="binding site" evidence="1">
    <location>
        <position position="105"/>
    </location>
    <ligand>
        <name>NAD(+)</name>
        <dbReference type="ChEBI" id="CHEBI:57540"/>
    </ligand>
</feature>
<feature type="binding site" evidence="1">
    <location>
        <position position="105"/>
    </location>
    <ligand>
        <name>nicotinamide</name>
        <dbReference type="ChEBI" id="CHEBI:17154"/>
    </ligand>
</feature>
<feature type="binding site" evidence="1">
    <location>
        <position position="120"/>
    </location>
    <ligand>
        <name>NAD(+)</name>
        <dbReference type="ChEBI" id="CHEBI:57540"/>
    </ligand>
</feature>
<feature type="binding site" evidence="1">
    <location>
        <position position="128"/>
    </location>
    <ligand>
        <name>Zn(2+)</name>
        <dbReference type="ChEBI" id="CHEBI:29105"/>
    </ligand>
</feature>
<feature type="binding site" evidence="1">
    <location>
        <position position="131"/>
    </location>
    <ligand>
        <name>Zn(2+)</name>
        <dbReference type="ChEBI" id="CHEBI:29105"/>
    </ligand>
</feature>
<feature type="binding site" evidence="1">
    <location>
        <position position="148"/>
    </location>
    <ligand>
        <name>Zn(2+)</name>
        <dbReference type="ChEBI" id="CHEBI:29105"/>
    </ligand>
</feature>
<feature type="binding site" evidence="1">
    <location>
        <position position="151"/>
    </location>
    <ligand>
        <name>Zn(2+)</name>
        <dbReference type="ChEBI" id="CHEBI:29105"/>
    </ligand>
</feature>
<feature type="binding site" evidence="1">
    <location>
        <position position="187"/>
    </location>
    <ligand>
        <name>NAD(+)</name>
        <dbReference type="ChEBI" id="CHEBI:57540"/>
    </ligand>
</feature>
<feature type="binding site" evidence="1">
    <location>
        <position position="188"/>
    </location>
    <ligand>
        <name>NAD(+)</name>
        <dbReference type="ChEBI" id="CHEBI:57540"/>
    </ligand>
</feature>
<feature type="binding site" evidence="1">
    <location>
        <position position="213"/>
    </location>
    <ligand>
        <name>NAD(+)</name>
        <dbReference type="ChEBI" id="CHEBI:57540"/>
    </ligand>
</feature>
<feature type="binding site" evidence="1">
    <location>
        <position position="231"/>
    </location>
    <ligand>
        <name>NAD(+)</name>
        <dbReference type="ChEBI" id="CHEBI:57540"/>
    </ligand>
</feature>